<keyword id="KW-0004">4Fe-4S</keyword>
<keyword id="KW-0963">Cytoplasm</keyword>
<keyword id="KW-0408">Iron</keyword>
<keyword id="KW-0411">Iron-sulfur</keyword>
<keyword id="KW-0479">Metal-binding</keyword>
<keyword id="KW-0949">S-adenosyl-L-methionine</keyword>
<keyword id="KW-0808">Transferase</keyword>
<keyword id="KW-0819">tRNA processing</keyword>
<dbReference type="EC" id="2.8.4.3" evidence="1"/>
<dbReference type="EMBL" id="AM039952">
    <property type="protein sequence ID" value="CAJ24315.1"/>
    <property type="molecule type" value="Genomic_DNA"/>
</dbReference>
<dbReference type="RefSeq" id="WP_011347778.1">
    <property type="nucleotide sequence ID" value="NZ_CP017190.1"/>
</dbReference>
<dbReference type="SMR" id="Q3BS94"/>
<dbReference type="STRING" id="456327.BJD11_09680"/>
<dbReference type="KEGG" id="xcv:XCV2638"/>
<dbReference type="eggNOG" id="COG0621">
    <property type="taxonomic scope" value="Bacteria"/>
</dbReference>
<dbReference type="HOGENOM" id="CLU_018697_2_2_6"/>
<dbReference type="Proteomes" id="UP000007069">
    <property type="component" value="Chromosome"/>
</dbReference>
<dbReference type="GO" id="GO:0005829">
    <property type="term" value="C:cytosol"/>
    <property type="evidence" value="ECO:0007669"/>
    <property type="project" value="TreeGrafter"/>
</dbReference>
<dbReference type="GO" id="GO:0051539">
    <property type="term" value="F:4 iron, 4 sulfur cluster binding"/>
    <property type="evidence" value="ECO:0007669"/>
    <property type="project" value="UniProtKB-UniRule"/>
</dbReference>
<dbReference type="GO" id="GO:0046872">
    <property type="term" value="F:metal ion binding"/>
    <property type="evidence" value="ECO:0007669"/>
    <property type="project" value="UniProtKB-KW"/>
</dbReference>
<dbReference type="GO" id="GO:0035597">
    <property type="term" value="F:N6-isopentenyladenosine methylthiotransferase activity"/>
    <property type="evidence" value="ECO:0007669"/>
    <property type="project" value="TreeGrafter"/>
</dbReference>
<dbReference type="CDD" id="cd01335">
    <property type="entry name" value="Radical_SAM"/>
    <property type="match status" value="1"/>
</dbReference>
<dbReference type="FunFam" id="3.40.50.12160:FF:000001">
    <property type="entry name" value="tRNA-2-methylthio-N(6)-dimethylallyladenosine synthase"/>
    <property type="match status" value="1"/>
</dbReference>
<dbReference type="FunFam" id="3.80.30.20:FF:000001">
    <property type="entry name" value="tRNA-2-methylthio-N(6)-dimethylallyladenosine synthase 2"/>
    <property type="match status" value="1"/>
</dbReference>
<dbReference type="Gene3D" id="3.40.50.12160">
    <property type="entry name" value="Methylthiotransferase, N-terminal domain"/>
    <property type="match status" value="1"/>
</dbReference>
<dbReference type="Gene3D" id="3.80.30.20">
    <property type="entry name" value="tm_1862 like domain"/>
    <property type="match status" value="1"/>
</dbReference>
<dbReference type="HAMAP" id="MF_01864">
    <property type="entry name" value="tRNA_metthiotr_MiaB"/>
    <property type="match status" value="1"/>
</dbReference>
<dbReference type="InterPro" id="IPR006638">
    <property type="entry name" value="Elp3/MiaA/NifB-like_rSAM"/>
</dbReference>
<dbReference type="InterPro" id="IPR005839">
    <property type="entry name" value="Methylthiotransferase"/>
</dbReference>
<dbReference type="InterPro" id="IPR020612">
    <property type="entry name" value="Methylthiotransferase_CS"/>
</dbReference>
<dbReference type="InterPro" id="IPR013848">
    <property type="entry name" value="Methylthiotransferase_N"/>
</dbReference>
<dbReference type="InterPro" id="IPR038135">
    <property type="entry name" value="Methylthiotransferase_N_sf"/>
</dbReference>
<dbReference type="InterPro" id="IPR006463">
    <property type="entry name" value="MiaB_methiolase"/>
</dbReference>
<dbReference type="InterPro" id="IPR007197">
    <property type="entry name" value="rSAM"/>
</dbReference>
<dbReference type="InterPro" id="IPR023404">
    <property type="entry name" value="rSAM_horseshoe"/>
</dbReference>
<dbReference type="InterPro" id="IPR002792">
    <property type="entry name" value="TRAM_dom"/>
</dbReference>
<dbReference type="NCBIfam" id="TIGR01574">
    <property type="entry name" value="miaB-methiolase"/>
    <property type="match status" value="1"/>
</dbReference>
<dbReference type="NCBIfam" id="TIGR00089">
    <property type="entry name" value="MiaB/RimO family radical SAM methylthiotransferase"/>
    <property type="match status" value="1"/>
</dbReference>
<dbReference type="PANTHER" id="PTHR43020">
    <property type="entry name" value="CDK5 REGULATORY SUBUNIT-ASSOCIATED PROTEIN 1"/>
    <property type="match status" value="1"/>
</dbReference>
<dbReference type="PANTHER" id="PTHR43020:SF2">
    <property type="entry name" value="MITOCHONDRIAL TRNA METHYLTHIOTRANSFERASE CDK5RAP1"/>
    <property type="match status" value="1"/>
</dbReference>
<dbReference type="Pfam" id="PF04055">
    <property type="entry name" value="Radical_SAM"/>
    <property type="match status" value="1"/>
</dbReference>
<dbReference type="Pfam" id="PF01938">
    <property type="entry name" value="TRAM"/>
    <property type="match status" value="1"/>
</dbReference>
<dbReference type="Pfam" id="PF00919">
    <property type="entry name" value="UPF0004"/>
    <property type="match status" value="1"/>
</dbReference>
<dbReference type="SFLD" id="SFLDF00273">
    <property type="entry name" value="(dimethylallyl)adenosine_tRNA"/>
    <property type="match status" value="1"/>
</dbReference>
<dbReference type="SFLD" id="SFLDG01082">
    <property type="entry name" value="B12-binding_domain_containing"/>
    <property type="match status" value="1"/>
</dbReference>
<dbReference type="SFLD" id="SFLDS00029">
    <property type="entry name" value="Radical_SAM"/>
    <property type="match status" value="1"/>
</dbReference>
<dbReference type="SMART" id="SM00729">
    <property type="entry name" value="Elp3"/>
    <property type="match status" value="1"/>
</dbReference>
<dbReference type="SUPFAM" id="SSF102114">
    <property type="entry name" value="Radical SAM enzymes"/>
    <property type="match status" value="1"/>
</dbReference>
<dbReference type="PROSITE" id="PS51449">
    <property type="entry name" value="MTTASE_N"/>
    <property type="match status" value="1"/>
</dbReference>
<dbReference type="PROSITE" id="PS01278">
    <property type="entry name" value="MTTASE_RADICAL"/>
    <property type="match status" value="1"/>
</dbReference>
<dbReference type="PROSITE" id="PS51918">
    <property type="entry name" value="RADICAL_SAM"/>
    <property type="match status" value="1"/>
</dbReference>
<dbReference type="PROSITE" id="PS50926">
    <property type="entry name" value="TRAM"/>
    <property type="match status" value="1"/>
</dbReference>
<organism>
    <name type="scientific">Xanthomonas euvesicatoria pv. vesicatoria (strain 85-10)</name>
    <name type="common">Xanthomonas campestris pv. vesicatoria</name>
    <dbReference type="NCBI Taxonomy" id="316273"/>
    <lineage>
        <taxon>Bacteria</taxon>
        <taxon>Pseudomonadati</taxon>
        <taxon>Pseudomonadota</taxon>
        <taxon>Gammaproteobacteria</taxon>
        <taxon>Lysobacterales</taxon>
        <taxon>Lysobacteraceae</taxon>
        <taxon>Xanthomonas</taxon>
    </lineage>
</organism>
<name>MIAB_XANE5</name>
<sequence length="484" mass="52627">MPGTPVSDLSAAAAVDAPALLPLPVARPSAPAVVRGKLYIKTHGCQMNEYDSAKMADVLAASEGLELTDNPEEADVVLVNTCSIREKAQEKVFSQLGRWKALKAGGKPVIIGVGGCVASQEGEAIVKRAPYVDLVFGPQTLHRLPELIRARRESGKSQVDISFPEIEKFDRLPEPRAEGPSAFVSIMEGCSKYCSFCVVPYTRGEEVSRPFEDVLVEVAQLAAQGVREINLLGQNVNAYRGAYGADAGDAAQYADLGLLIRTIAQIEGIGRIRFTTSHPLEFSDSLVDAYRDVPQLANYLHLPVQAGSDRILSAMKRGYTALEFKSKIRKLRAVRPDISISSDFIVGFPGETEADFEKTMKLIEDVGFDQSFSFVYSRRPGTPASDLQDDTPEAVKQARLARLQAHINAHAASISQSMVGSVQRVLVEGPSRRDPNELTGKSENMRPVNFPGNPRLIGQFVDVLITEAMSNSLRGRIQLDDSAQ</sequence>
<reference key="1">
    <citation type="journal article" date="2005" name="J. Bacteriol.">
        <title>Insights into genome plasticity and pathogenicity of the plant pathogenic Bacterium Xanthomonas campestris pv. vesicatoria revealed by the complete genome sequence.</title>
        <authorList>
            <person name="Thieme F."/>
            <person name="Koebnik R."/>
            <person name="Bekel T."/>
            <person name="Berger C."/>
            <person name="Boch J."/>
            <person name="Buettner D."/>
            <person name="Caldana C."/>
            <person name="Gaigalat L."/>
            <person name="Goesmann A."/>
            <person name="Kay S."/>
            <person name="Kirchner O."/>
            <person name="Lanz C."/>
            <person name="Linke B."/>
            <person name="McHardy A.C."/>
            <person name="Meyer F."/>
            <person name="Mittenhuber G."/>
            <person name="Nies D.H."/>
            <person name="Niesbach-Kloesgen U."/>
            <person name="Patschkowski T."/>
            <person name="Rueckert C."/>
            <person name="Rupp O."/>
            <person name="Schneiker S."/>
            <person name="Schuster S.C."/>
            <person name="Vorhoelter F.J."/>
            <person name="Weber E."/>
            <person name="Puehler A."/>
            <person name="Bonas U."/>
            <person name="Bartels D."/>
            <person name="Kaiser O."/>
        </authorList>
    </citation>
    <scope>NUCLEOTIDE SEQUENCE [LARGE SCALE GENOMIC DNA]</scope>
    <source>
        <strain>85-10</strain>
    </source>
</reference>
<protein>
    <recommendedName>
        <fullName evidence="1">tRNA-2-methylthio-N(6)-dimethylallyladenosine synthase</fullName>
        <ecNumber evidence="1">2.8.4.3</ecNumber>
    </recommendedName>
    <alternativeName>
        <fullName evidence="1">(Dimethylallyl)adenosine tRNA methylthiotransferase MiaB</fullName>
    </alternativeName>
    <alternativeName>
        <fullName evidence="1">tRNA-i(6)A37 methylthiotransferase</fullName>
    </alternativeName>
</protein>
<proteinExistence type="inferred from homology"/>
<gene>
    <name evidence="1" type="primary">miaB</name>
    <name type="ordered locus">XCV2638</name>
</gene>
<feature type="chain" id="PRO_0000374646" description="tRNA-2-methylthio-N(6)-dimethylallyladenosine synthase">
    <location>
        <begin position="1"/>
        <end position="484"/>
    </location>
</feature>
<feature type="domain" description="MTTase N-terminal" evidence="1">
    <location>
        <begin position="36"/>
        <end position="153"/>
    </location>
</feature>
<feature type="domain" description="Radical SAM core" evidence="2">
    <location>
        <begin position="176"/>
        <end position="415"/>
    </location>
</feature>
<feature type="domain" description="TRAM" evidence="1">
    <location>
        <begin position="416"/>
        <end position="479"/>
    </location>
</feature>
<feature type="region of interest" description="Disordered" evidence="3">
    <location>
        <begin position="428"/>
        <end position="450"/>
    </location>
</feature>
<feature type="binding site" evidence="1">
    <location>
        <position position="45"/>
    </location>
    <ligand>
        <name>[4Fe-4S] cluster</name>
        <dbReference type="ChEBI" id="CHEBI:49883"/>
        <label>1</label>
    </ligand>
</feature>
<feature type="binding site" evidence="1">
    <location>
        <position position="82"/>
    </location>
    <ligand>
        <name>[4Fe-4S] cluster</name>
        <dbReference type="ChEBI" id="CHEBI:49883"/>
        <label>1</label>
    </ligand>
</feature>
<feature type="binding site" evidence="1">
    <location>
        <position position="116"/>
    </location>
    <ligand>
        <name>[4Fe-4S] cluster</name>
        <dbReference type="ChEBI" id="CHEBI:49883"/>
        <label>1</label>
    </ligand>
</feature>
<feature type="binding site" evidence="1">
    <location>
        <position position="190"/>
    </location>
    <ligand>
        <name>[4Fe-4S] cluster</name>
        <dbReference type="ChEBI" id="CHEBI:49883"/>
        <label>2</label>
        <note>4Fe-4S-S-AdoMet</note>
    </ligand>
</feature>
<feature type="binding site" evidence="1">
    <location>
        <position position="194"/>
    </location>
    <ligand>
        <name>[4Fe-4S] cluster</name>
        <dbReference type="ChEBI" id="CHEBI:49883"/>
        <label>2</label>
        <note>4Fe-4S-S-AdoMet</note>
    </ligand>
</feature>
<feature type="binding site" evidence="1">
    <location>
        <position position="197"/>
    </location>
    <ligand>
        <name>[4Fe-4S] cluster</name>
        <dbReference type="ChEBI" id="CHEBI:49883"/>
        <label>2</label>
        <note>4Fe-4S-S-AdoMet</note>
    </ligand>
</feature>
<evidence type="ECO:0000255" key="1">
    <source>
        <dbReference type="HAMAP-Rule" id="MF_01864"/>
    </source>
</evidence>
<evidence type="ECO:0000255" key="2">
    <source>
        <dbReference type="PROSITE-ProRule" id="PRU01266"/>
    </source>
</evidence>
<evidence type="ECO:0000256" key="3">
    <source>
        <dbReference type="SAM" id="MobiDB-lite"/>
    </source>
</evidence>
<accession>Q3BS94</accession>
<comment type="function">
    <text evidence="1">Catalyzes the methylthiolation of N6-(dimethylallyl)adenosine (i(6)A), leading to the formation of 2-methylthio-N6-(dimethylallyl)adenosine (ms(2)i(6)A) at position 37 in tRNAs that read codons beginning with uridine.</text>
</comment>
<comment type="catalytic activity">
    <reaction evidence="1">
        <text>N(6)-dimethylallyladenosine(37) in tRNA + (sulfur carrier)-SH + AH2 + 2 S-adenosyl-L-methionine = 2-methylsulfanyl-N(6)-dimethylallyladenosine(37) in tRNA + (sulfur carrier)-H + 5'-deoxyadenosine + L-methionine + A + S-adenosyl-L-homocysteine + 2 H(+)</text>
        <dbReference type="Rhea" id="RHEA:37067"/>
        <dbReference type="Rhea" id="RHEA-COMP:10375"/>
        <dbReference type="Rhea" id="RHEA-COMP:10376"/>
        <dbReference type="Rhea" id="RHEA-COMP:14737"/>
        <dbReference type="Rhea" id="RHEA-COMP:14739"/>
        <dbReference type="ChEBI" id="CHEBI:13193"/>
        <dbReference type="ChEBI" id="CHEBI:15378"/>
        <dbReference type="ChEBI" id="CHEBI:17319"/>
        <dbReference type="ChEBI" id="CHEBI:17499"/>
        <dbReference type="ChEBI" id="CHEBI:29917"/>
        <dbReference type="ChEBI" id="CHEBI:57844"/>
        <dbReference type="ChEBI" id="CHEBI:57856"/>
        <dbReference type="ChEBI" id="CHEBI:59789"/>
        <dbReference type="ChEBI" id="CHEBI:64428"/>
        <dbReference type="ChEBI" id="CHEBI:74415"/>
        <dbReference type="ChEBI" id="CHEBI:74417"/>
        <dbReference type="EC" id="2.8.4.3"/>
    </reaction>
</comment>
<comment type="cofactor">
    <cofactor evidence="1">
        <name>[4Fe-4S] cluster</name>
        <dbReference type="ChEBI" id="CHEBI:49883"/>
    </cofactor>
    <text evidence="1">Binds 2 [4Fe-4S] clusters. One cluster is coordinated with 3 cysteines and an exchangeable S-adenosyl-L-methionine.</text>
</comment>
<comment type="subunit">
    <text evidence="1">Monomer.</text>
</comment>
<comment type="subcellular location">
    <subcellularLocation>
        <location evidence="1">Cytoplasm</location>
    </subcellularLocation>
</comment>
<comment type="similarity">
    <text evidence="1">Belongs to the methylthiotransferase family. MiaB subfamily.</text>
</comment>